<name>Y1957_KLEP3</name>
<proteinExistence type="inferred from homology"/>
<protein>
    <recommendedName>
        <fullName evidence="1">UPF0266 membrane protein KPK_1957</fullName>
    </recommendedName>
</protein>
<feature type="chain" id="PRO_1000136644" description="UPF0266 membrane protein KPK_1957">
    <location>
        <begin position="1"/>
        <end position="152"/>
    </location>
</feature>
<feature type="transmembrane region" description="Helical" evidence="1">
    <location>
        <begin position="6"/>
        <end position="26"/>
    </location>
</feature>
<feature type="transmembrane region" description="Helical" evidence="1">
    <location>
        <begin position="45"/>
        <end position="65"/>
    </location>
</feature>
<feature type="transmembrane region" description="Helical" evidence="1">
    <location>
        <begin position="67"/>
        <end position="87"/>
    </location>
</feature>
<comment type="subcellular location">
    <subcellularLocation>
        <location evidence="1">Cell inner membrane</location>
        <topology evidence="1">Multi-pass membrane protein</topology>
    </subcellularLocation>
</comment>
<comment type="similarity">
    <text evidence="1">Belongs to the UPF0266 family.</text>
</comment>
<sequence length="152" mass="17757">MTFTDLVIILFILALLAYAVYDQFIMPRRNGPVLLAIPLLRRSRVDGLIFVGLTAILIYNNITQHGTPITTWLLSALALMGLYLFWIRTPKIIFKPRGFFFANVWIEYQRIKEMNLSEDGVLVMQLEQRRLLIRVRNIDDLEKIYKLLVSTQ</sequence>
<organism>
    <name type="scientific">Klebsiella pneumoniae (strain 342)</name>
    <dbReference type="NCBI Taxonomy" id="507522"/>
    <lineage>
        <taxon>Bacteria</taxon>
        <taxon>Pseudomonadati</taxon>
        <taxon>Pseudomonadota</taxon>
        <taxon>Gammaproteobacteria</taxon>
        <taxon>Enterobacterales</taxon>
        <taxon>Enterobacteriaceae</taxon>
        <taxon>Klebsiella/Raoultella group</taxon>
        <taxon>Klebsiella</taxon>
        <taxon>Klebsiella pneumoniae complex</taxon>
    </lineage>
</organism>
<gene>
    <name type="ordered locus">KPK_1957</name>
</gene>
<accession>B5XQ53</accession>
<evidence type="ECO:0000255" key="1">
    <source>
        <dbReference type="HAMAP-Rule" id="MF_01071"/>
    </source>
</evidence>
<reference key="1">
    <citation type="journal article" date="2008" name="PLoS Genet.">
        <title>Complete genome sequence of the N2-fixing broad host range endophyte Klebsiella pneumoniae 342 and virulence predictions verified in mice.</title>
        <authorList>
            <person name="Fouts D.E."/>
            <person name="Tyler H.L."/>
            <person name="DeBoy R.T."/>
            <person name="Daugherty S."/>
            <person name="Ren Q."/>
            <person name="Badger J.H."/>
            <person name="Durkin A.S."/>
            <person name="Huot H."/>
            <person name="Shrivastava S."/>
            <person name="Kothari S."/>
            <person name="Dodson R.J."/>
            <person name="Mohamoud Y."/>
            <person name="Khouri H."/>
            <person name="Roesch L.F.W."/>
            <person name="Krogfelt K.A."/>
            <person name="Struve C."/>
            <person name="Triplett E.W."/>
            <person name="Methe B.A."/>
        </authorList>
    </citation>
    <scope>NUCLEOTIDE SEQUENCE [LARGE SCALE GENOMIC DNA]</scope>
    <source>
        <strain>342</strain>
    </source>
</reference>
<keyword id="KW-0997">Cell inner membrane</keyword>
<keyword id="KW-1003">Cell membrane</keyword>
<keyword id="KW-0472">Membrane</keyword>
<keyword id="KW-0812">Transmembrane</keyword>
<keyword id="KW-1133">Transmembrane helix</keyword>
<dbReference type="EMBL" id="CP000964">
    <property type="protein sequence ID" value="ACI08917.1"/>
    <property type="molecule type" value="Genomic_DNA"/>
</dbReference>
<dbReference type="KEGG" id="kpe:KPK_1957"/>
<dbReference type="HOGENOM" id="CLU_133645_0_0_6"/>
<dbReference type="BioCyc" id="KPNE507522:GI0B-1951-MONOMER"/>
<dbReference type="Proteomes" id="UP000001734">
    <property type="component" value="Chromosome"/>
</dbReference>
<dbReference type="GO" id="GO:0005886">
    <property type="term" value="C:plasma membrane"/>
    <property type="evidence" value="ECO:0007669"/>
    <property type="project" value="UniProtKB-SubCell"/>
</dbReference>
<dbReference type="HAMAP" id="MF_01071">
    <property type="entry name" value="UPF0266"/>
    <property type="match status" value="1"/>
</dbReference>
<dbReference type="InterPro" id="IPR009328">
    <property type="entry name" value="DUF986"/>
</dbReference>
<dbReference type="NCBIfam" id="NF002791">
    <property type="entry name" value="PRK02913.1"/>
    <property type="match status" value="1"/>
</dbReference>
<dbReference type="Pfam" id="PF06173">
    <property type="entry name" value="DUF986"/>
    <property type="match status" value="1"/>
</dbReference>
<dbReference type="PIRSF" id="PIRSF020687">
    <property type="entry name" value="UCP020687"/>
    <property type="match status" value="1"/>
</dbReference>